<gene>
    <name type="primary">YUC9</name>
    <name type="synonym">YUCCA9</name>
    <name type="ordered locus">At1g04180</name>
    <name type="ORF">F20D22.5</name>
</gene>
<proteinExistence type="evidence at transcript level"/>
<reference key="1">
    <citation type="journal article" date="2000" name="Nature">
        <title>Sequence and analysis of chromosome 1 of the plant Arabidopsis thaliana.</title>
        <authorList>
            <person name="Theologis A."/>
            <person name="Ecker J.R."/>
            <person name="Palm C.J."/>
            <person name="Federspiel N.A."/>
            <person name="Kaul S."/>
            <person name="White O."/>
            <person name="Alonso J."/>
            <person name="Altafi H."/>
            <person name="Araujo R."/>
            <person name="Bowman C.L."/>
            <person name="Brooks S.Y."/>
            <person name="Buehler E."/>
            <person name="Chan A."/>
            <person name="Chao Q."/>
            <person name="Chen H."/>
            <person name="Cheuk R.F."/>
            <person name="Chin C.W."/>
            <person name="Chung M.K."/>
            <person name="Conn L."/>
            <person name="Conway A.B."/>
            <person name="Conway A.R."/>
            <person name="Creasy T.H."/>
            <person name="Dewar K."/>
            <person name="Dunn P."/>
            <person name="Etgu P."/>
            <person name="Feldblyum T.V."/>
            <person name="Feng J.-D."/>
            <person name="Fong B."/>
            <person name="Fujii C.Y."/>
            <person name="Gill J.E."/>
            <person name="Goldsmith A.D."/>
            <person name="Haas B."/>
            <person name="Hansen N.F."/>
            <person name="Hughes B."/>
            <person name="Huizar L."/>
            <person name="Hunter J.L."/>
            <person name="Jenkins J."/>
            <person name="Johnson-Hopson C."/>
            <person name="Khan S."/>
            <person name="Khaykin E."/>
            <person name="Kim C.J."/>
            <person name="Koo H.L."/>
            <person name="Kremenetskaia I."/>
            <person name="Kurtz D.B."/>
            <person name="Kwan A."/>
            <person name="Lam B."/>
            <person name="Langin-Hooper S."/>
            <person name="Lee A."/>
            <person name="Lee J.M."/>
            <person name="Lenz C.A."/>
            <person name="Li J.H."/>
            <person name="Li Y.-P."/>
            <person name="Lin X."/>
            <person name="Liu S.X."/>
            <person name="Liu Z.A."/>
            <person name="Luros J.S."/>
            <person name="Maiti R."/>
            <person name="Marziali A."/>
            <person name="Militscher J."/>
            <person name="Miranda M."/>
            <person name="Nguyen M."/>
            <person name="Nierman W.C."/>
            <person name="Osborne B.I."/>
            <person name="Pai G."/>
            <person name="Peterson J."/>
            <person name="Pham P.K."/>
            <person name="Rizzo M."/>
            <person name="Rooney T."/>
            <person name="Rowley D."/>
            <person name="Sakano H."/>
            <person name="Salzberg S.L."/>
            <person name="Schwartz J.R."/>
            <person name="Shinn P."/>
            <person name="Southwick A.M."/>
            <person name="Sun H."/>
            <person name="Tallon L.J."/>
            <person name="Tambunga G."/>
            <person name="Toriumi M.J."/>
            <person name="Town C.D."/>
            <person name="Utterback T."/>
            <person name="Van Aken S."/>
            <person name="Vaysberg M."/>
            <person name="Vysotskaia V.S."/>
            <person name="Walker M."/>
            <person name="Wu D."/>
            <person name="Yu G."/>
            <person name="Fraser C.M."/>
            <person name="Venter J.C."/>
            <person name="Davis R.W."/>
        </authorList>
    </citation>
    <scope>NUCLEOTIDE SEQUENCE [LARGE SCALE GENOMIC DNA]</scope>
    <source>
        <strain>cv. Columbia</strain>
    </source>
</reference>
<reference key="2">
    <citation type="journal article" date="2017" name="Plant J.">
        <title>Araport11: a complete reannotation of the Arabidopsis thaliana reference genome.</title>
        <authorList>
            <person name="Cheng C.Y."/>
            <person name="Krishnakumar V."/>
            <person name="Chan A.P."/>
            <person name="Thibaud-Nissen F."/>
            <person name="Schobel S."/>
            <person name="Town C.D."/>
        </authorList>
    </citation>
    <scope>GENOME REANNOTATION</scope>
    <source>
        <strain>cv. Columbia</strain>
    </source>
</reference>
<reference key="3">
    <citation type="journal article" date="2006" name="Genes Dev.">
        <title>Auxin biosynthesis by the YUCCA flavin monooxygenases controls the formation of floral organs and vascular tissues in Arabidopsis.</title>
        <authorList>
            <person name="Cheng Y."/>
            <person name="Dai X."/>
            <person name="Zhao Y."/>
        </authorList>
    </citation>
    <scope>GENE FAMILY</scope>
    <scope>NOMENCLATURE</scope>
</reference>
<reference key="4">
    <citation type="journal article" date="2007" name="Plant J.">
        <title>Identification of a flavin-monooxygenase as the S-oxygenating enzyme in aliphatic glucosinolate biosynthesis in Arabidopsis.</title>
        <authorList>
            <person name="Hansen B.G."/>
            <person name="Kliebenstein D.J."/>
            <person name="Halkier B.A."/>
        </authorList>
    </citation>
    <scope>GENE FAMILY</scope>
    <source>
        <strain>cv. Columbia</strain>
    </source>
</reference>
<reference key="5">
    <citation type="journal article" date="2012" name="Planta">
        <title>Activation of a flavin monooxygenase gene YUCCA7 enhances drought resistance in Arabidopsis.</title>
        <authorList>
            <person name="Lee M."/>
            <person name="Jung J.H."/>
            <person name="Han D.Y."/>
            <person name="Seo P.J."/>
            <person name="Park W.J."/>
            <person name="Park C.M."/>
        </authorList>
    </citation>
    <scope>INDUCTION</scope>
</reference>
<feature type="chain" id="PRO_0000400076" description="Probable indole-3-pyruvate monooxygenase YUCCA9">
    <location>
        <begin position="1"/>
        <end position="421"/>
    </location>
</feature>
<feature type="binding site" evidence="2">
    <location>
        <begin position="29"/>
        <end position="34"/>
    </location>
    <ligand>
        <name>FAD</name>
        <dbReference type="ChEBI" id="CHEBI:57692"/>
    </ligand>
</feature>
<feature type="binding site" evidence="2">
    <location>
        <begin position="196"/>
        <end position="201"/>
    </location>
    <ligand>
        <name>NADP(+)</name>
        <dbReference type="ChEBI" id="CHEBI:58349"/>
    </ligand>
</feature>
<accession>O64489</accession>
<comment type="function">
    <text>Involved in auxin biosynthesis. Belongs to the set of redundant YUCCA genes probably responsible for auxin biosynthesis in roots.</text>
</comment>
<comment type="catalytic activity">
    <reaction>
        <text>indole-3-pyruvate + NADPH + O2 + H(+) = (indol-3-yl)acetate + CO2 + NADP(+) + H2O</text>
        <dbReference type="Rhea" id="RHEA:34331"/>
        <dbReference type="ChEBI" id="CHEBI:15377"/>
        <dbReference type="ChEBI" id="CHEBI:15378"/>
        <dbReference type="ChEBI" id="CHEBI:15379"/>
        <dbReference type="ChEBI" id="CHEBI:16526"/>
        <dbReference type="ChEBI" id="CHEBI:17640"/>
        <dbReference type="ChEBI" id="CHEBI:30854"/>
        <dbReference type="ChEBI" id="CHEBI:57783"/>
        <dbReference type="ChEBI" id="CHEBI:58349"/>
        <dbReference type="EC" id="1.14.13.168"/>
    </reaction>
</comment>
<comment type="cofactor">
    <cofactor evidence="1">
        <name>FAD</name>
        <dbReference type="ChEBI" id="CHEBI:57692"/>
    </cofactor>
</comment>
<comment type="pathway">
    <text>Plant hormone metabolism; auxin biosynthesis.</text>
</comment>
<comment type="induction">
    <text evidence="3">Up-regulated by drought.</text>
</comment>
<comment type="similarity">
    <text evidence="4">Belongs to the FMO family.</text>
</comment>
<evidence type="ECO:0000250" key="1"/>
<evidence type="ECO:0000255" key="2"/>
<evidence type="ECO:0000269" key="3">
    <source>
    </source>
</evidence>
<evidence type="ECO:0000305" key="4"/>
<sequence>MENMFRLMASEEYFSERRCVWVNGPVIVGAGPSGLATAACLHDQGVPFVVVERSDCIASLWQKRTYDRLKLHLPKKFCQLPKMPFPDHYPEYPTKRQFIDYLESYANRFDIKPEFNKSVESARFDETSGLWRVRTTSDGEEMEYICRWLVVATGENAERVVPEINGLMTEFDGEVIHACEYKSGEKFRGKRVLVVGCGNSGMEVSLDLANHNAITSMVVRSSVHVLPREIMGKSTFGISVMMMKWLPLWLVDKLLLILSWLVLGSLSNYGLKRPDIGPMELKSMTGKTPVLDIGALEKIKSGDVEIVPAIKQFSRHHVELVDGQKLDIDAVVLATGYRSNVPSWLQESEFFSKNGFPKSPFPNAWKGKSGLYAAGFTRKGLAGASVDAVNIAQDIGNVWREETKRQKMRRNVGHRRCISVA</sequence>
<organism>
    <name type="scientific">Arabidopsis thaliana</name>
    <name type="common">Mouse-ear cress</name>
    <dbReference type="NCBI Taxonomy" id="3702"/>
    <lineage>
        <taxon>Eukaryota</taxon>
        <taxon>Viridiplantae</taxon>
        <taxon>Streptophyta</taxon>
        <taxon>Embryophyta</taxon>
        <taxon>Tracheophyta</taxon>
        <taxon>Spermatophyta</taxon>
        <taxon>Magnoliopsida</taxon>
        <taxon>eudicotyledons</taxon>
        <taxon>Gunneridae</taxon>
        <taxon>Pentapetalae</taxon>
        <taxon>rosids</taxon>
        <taxon>malvids</taxon>
        <taxon>Brassicales</taxon>
        <taxon>Brassicaceae</taxon>
        <taxon>Camelineae</taxon>
        <taxon>Arabidopsis</taxon>
    </lineage>
</organism>
<name>YUC9_ARATH</name>
<protein>
    <recommendedName>
        <fullName>Probable indole-3-pyruvate monooxygenase YUCCA9</fullName>
        <ecNumber>1.14.13.168</ecNumber>
    </recommendedName>
    <alternativeName>
        <fullName>Flavin-containing monooxygenase YUCCA9</fullName>
    </alternativeName>
</protein>
<keyword id="KW-0073">Auxin biosynthesis</keyword>
<keyword id="KW-0274">FAD</keyword>
<keyword id="KW-0285">Flavoprotein</keyword>
<keyword id="KW-0503">Monooxygenase</keyword>
<keyword id="KW-0521">NADP</keyword>
<keyword id="KW-0560">Oxidoreductase</keyword>
<keyword id="KW-1185">Reference proteome</keyword>
<dbReference type="EC" id="1.14.13.168"/>
<dbReference type="EMBL" id="AC002411">
    <property type="protein sequence ID" value="AAC16744.1"/>
    <property type="molecule type" value="Genomic_DNA"/>
</dbReference>
<dbReference type="EMBL" id="CP002684">
    <property type="protein sequence ID" value="AEE27667.1"/>
    <property type="molecule type" value="Genomic_DNA"/>
</dbReference>
<dbReference type="PIR" id="T00955">
    <property type="entry name" value="T00955"/>
</dbReference>
<dbReference type="RefSeq" id="NP_171914.1">
    <property type="nucleotide sequence ID" value="NM_100299.2"/>
</dbReference>
<dbReference type="SMR" id="O64489"/>
<dbReference type="STRING" id="3702.O64489"/>
<dbReference type="PaxDb" id="3702-AT1G04180.1"/>
<dbReference type="EnsemblPlants" id="AT1G04180.1">
    <property type="protein sequence ID" value="AT1G04180.1"/>
    <property type="gene ID" value="AT1G04180"/>
</dbReference>
<dbReference type="GeneID" id="837024"/>
<dbReference type="Gramene" id="AT1G04180.1">
    <property type="protein sequence ID" value="AT1G04180.1"/>
    <property type="gene ID" value="AT1G04180"/>
</dbReference>
<dbReference type="KEGG" id="ath:AT1G04180"/>
<dbReference type="Araport" id="AT1G04180"/>
<dbReference type="TAIR" id="AT1G04180">
    <property type="gene designation" value="YUC9"/>
</dbReference>
<dbReference type="eggNOG" id="KOG1399">
    <property type="taxonomic scope" value="Eukaryota"/>
</dbReference>
<dbReference type="HOGENOM" id="CLU_006909_2_0_1"/>
<dbReference type="InParanoid" id="O64489"/>
<dbReference type="OMA" id="FGISVMM"/>
<dbReference type="PhylomeDB" id="O64489"/>
<dbReference type="UniPathway" id="UPA00151"/>
<dbReference type="PRO" id="PR:O64489"/>
<dbReference type="Proteomes" id="UP000006548">
    <property type="component" value="Chromosome 1"/>
</dbReference>
<dbReference type="ExpressionAtlas" id="O64489">
    <property type="expression patterns" value="baseline and differential"/>
</dbReference>
<dbReference type="GO" id="GO:0050660">
    <property type="term" value="F:flavin adenine dinucleotide binding"/>
    <property type="evidence" value="ECO:0007669"/>
    <property type="project" value="InterPro"/>
</dbReference>
<dbReference type="GO" id="GO:0103075">
    <property type="term" value="F:indole-3-pyruvate monooxygenase activity"/>
    <property type="evidence" value="ECO:0007669"/>
    <property type="project" value="UniProtKB-EC"/>
</dbReference>
<dbReference type="GO" id="GO:0004499">
    <property type="term" value="F:N,N-dimethylaniline monooxygenase activity"/>
    <property type="evidence" value="ECO:0007669"/>
    <property type="project" value="InterPro"/>
</dbReference>
<dbReference type="GO" id="GO:0050661">
    <property type="term" value="F:NADP binding"/>
    <property type="evidence" value="ECO:0007669"/>
    <property type="project" value="InterPro"/>
</dbReference>
<dbReference type="GO" id="GO:0009851">
    <property type="term" value="P:auxin biosynthetic process"/>
    <property type="evidence" value="ECO:0007669"/>
    <property type="project" value="UniProtKB-UniPathway"/>
</dbReference>
<dbReference type="GO" id="GO:0009723">
    <property type="term" value="P:response to ethylene"/>
    <property type="evidence" value="ECO:0000270"/>
    <property type="project" value="TAIR"/>
</dbReference>
<dbReference type="GO" id="GO:0009635">
    <property type="term" value="P:response to herbicide"/>
    <property type="evidence" value="ECO:0000270"/>
    <property type="project" value="TAIR"/>
</dbReference>
<dbReference type="FunFam" id="3.50.50.60:FF:000100">
    <property type="entry name" value="Flavin-containing monooxygenase"/>
    <property type="match status" value="1"/>
</dbReference>
<dbReference type="Gene3D" id="3.50.50.60">
    <property type="entry name" value="FAD/NAD(P)-binding domain"/>
    <property type="match status" value="1"/>
</dbReference>
<dbReference type="InterPro" id="IPR050982">
    <property type="entry name" value="Auxin_biosynth/cation_transpt"/>
</dbReference>
<dbReference type="InterPro" id="IPR036188">
    <property type="entry name" value="FAD/NAD-bd_sf"/>
</dbReference>
<dbReference type="InterPro" id="IPR020946">
    <property type="entry name" value="Flavin_mOase-like"/>
</dbReference>
<dbReference type="PANTHER" id="PTHR43539">
    <property type="entry name" value="FLAVIN-BINDING MONOOXYGENASE-LIKE PROTEIN (AFU_ORTHOLOGUE AFUA_4G09220)"/>
    <property type="match status" value="1"/>
</dbReference>
<dbReference type="PANTHER" id="PTHR43539:SF43">
    <property type="entry name" value="INDOLE-3-PYRUVATE MONOOXYGENASE YUCCA9-RELATED"/>
    <property type="match status" value="1"/>
</dbReference>
<dbReference type="Pfam" id="PF00743">
    <property type="entry name" value="FMO-like"/>
    <property type="match status" value="1"/>
</dbReference>
<dbReference type="PRINTS" id="PR00368">
    <property type="entry name" value="FADPNR"/>
</dbReference>
<dbReference type="PRINTS" id="PR00469">
    <property type="entry name" value="PNDRDTASEII"/>
</dbReference>
<dbReference type="SUPFAM" id="SSF51905">
    <property type="entry name" value="FAD/NAD(P)-binding domain"/>
    <property type="match status" value="2"/>
</dbReference>